<accession>A8GKG6</accession>
<keyword id="KW-0648">Protein biosynthesis</keyword>
<keyword id="KW-0808">Transferase</keyword>
<gene>
    <name evidence="1" type="primary">fmt</name>
    <name type="ordered locus">Spro_4512</name>
</gene>
<protein>
    <recommendedName>
        <fullName evidence="1">Methionyl-tRNA formyltransferase</fullName>
        <ecNumber evidence="1">2.1.2.9</ecNumber>
    </recommendedName>
</protein>
<sequence>MSDSLRIIFAGTPDFAARHLDALLSSGHQIVGVFTQPDRPAGRGNKLTPSPVKVLAEQHHLPVFQPKSLRPEENQHLVADLNADVMVVVAYGLILPKAVLDMPRLGCINVHGSLLPRWRGAAPIQRSLWAGDHETGVTIMQMDVGLDTGDMMHKIACPIEADDTSASLYDKLAQLGPQGMLTTLQQMAAGTAKREVQDESLVTYAEKLSKEEARLDWNLPAVQLERCVRAFNPWPVSYFTIDDQPVKVWQATVLAQNADAEPGTIIHADKHGIQVATAEGILNLTQLQPAGKKPMSAQDLLNSRREWFTPGNRL</sequence>
<organism>
    <name type="scientific">Serratia proteamaculans (strain 568)</name>
    <dbReference type="NCBI Taxonomy" id="399741"/>
    <lineage>
        <taxon>Bacteria</taxon>
        <taxon>Pseudomonadati</taxon>
        <taxon>Pseudomonadota</taxon>
        <taxon>Gammaproteobacteria</taxon>
        <taxon>Enterobacterales</taxon>
        <taxon>Yersiniaceae</taxon>
        <taxon>Serratia</taxon>
    </lineage>
</organism>
<proteinExistence type="inferred from homology"/>
<evidence type="ECO:0000255" key="1">
    <source>
        <dbReference type="HAMAP-Rule" id="MF_00182"/>
    </source>
</evidence>
<reference key="1">
    <citation type="submission" date="2007-09" db="EMBL/GenBank/DDBJ databases">
        <title>Complete sequence of chromosome of Serratia proteamaculans 568.</title>
        <authorList>
            <consortium name="US DOE Joint Genome Institute"/>
            <person name="Copeland A."/>
            <person name="Lucas S."/>
            <person name="Lapidus A."/>
            <person name="Barry K."/>
            <person name="Glavina del Rio T."/>
            <person name="Dalin E."/>
            <person name="Tice H."/>
            <person name="Pitluck S."/>
            <person name="Chain P."/>
            <person name="Malfatti S."/>
            <person name="Shin M."/>
            <person name="Vergez L."/>
            <person name="Schmutz J."/>
            <person name="Larimer F."/>
            <person name="Land M."/>
            <person name="Hauser L."/>
            <person name="Kyrpides N."/>
            <person name="Kim E."/>
            <person name="Taghavi S."/>
            <person name="Newman L."/>
            <person name="Vangronsveld J."/>
            <person name="van der Lelie D."/>
            <person name="Richardson P."/>
        </authorList>
    </citation>
    <scope>NUCLEOTIDE SEQUENCE [LARGE SCALE GENOMIC DNA]</scope>
    <source>
        <strain>568</strain>
    </source>
</reference>
<feature type="chain" id="PRO_1000058408" description="Methionyl-tRNA formyltransferase">
    <location>
        <begin position="1"/>
        <end position="314"/>
    </location>
</feature>
<feature type="binding site" evidence="1">
    <location>
        <begin position="113"/>
        <end position="116"/>
    </location>
    <ligand>
        <name>(6S)-5,6,7,8-tetrahydrofolate</name>
        <dbReference type="ChEBI" id="CHEBI:57453"/>
    </ligand>
</feature>
<dbReference type="EC" id="2.1.2.9" evidence="1"/>
<dbReference type="EMBL" id="CP000826">
    <property type="protein sequence ID" value="ABV43606.1"/>
    <property type="molecule type" value="Genomic_DNA"/>
</dbReference>
<dbReference type="SMR" id="A8GKG6"/>
<dbReference type="STRING" id="399741.Spro_4512"/>
<dbReference type="KEGG" id="spe:Spro_4512"/>
<dbReference type="eggNOG" id="COG0223">
    <property type="taxonomic scope" value="Bacteria"/>
</dbReference>
<dbReference type="HOGENOM" id="CLU_033347_1_2_6"/>
<dbReference type="OrthoDB" id="9802815at2"/>
<dbReference type="GO" id="GO:0005829">
    <property type="term" value="C:cytosol"/>
    <property type="evidence" value="ECO:0007669"/>
    <property type="project" value="TreeGrafter"/>
</dbReference>
<dbReference type="GO" id="GO:0004479">
    <property type="term" value="F:methionyl-tRNA formyltransferase activity"/>
    <property type="evidence" value="ECO:0007669"/>
    <property type="project" value="UniProtKB-UniRule"/>
</dbReference>
<dbReference type="CDD" id="cd08646">
    <property type="entry name" value="FMT_core_Met-tRNA-FMT_N"/>
    <property type="match status" value="1"/>
</dbReference>
<dbReference type="CDD" id="cd08704">
    <property type="entry name" value="Met_tRNA_FMT_C"/>
    <property type="match status" value="1"/>
</dbReference>
<dbReference type="FunFam" id="3.10.25.10:FF:000001">
    <property type="entry name" value="Methionyl-tRNA formyltransferase"/>
    <property type="match status" value="1"/>
</dbReference>
<dbReference type="FunFam" id="3.40.50.170:FF:000003">
    <property type="entry name" value="Methionyl-tRNA formyltransferase"/>
    <property type="match status" value="1"/>
</dbReference>
<dbReference type="Gene3D" id="3.10.25.10">
    <property type="entry name" value="Formyl transferase, C-terminal domain"/>
    <property type="match status" value="1"/>
</dbReference>
<dbReference type="Gene3D" id="3.40.50.170">
    <property type="entry name" value="Formyl transferase, N-terminal domain"/>
    <property type="match status" value="1"/>
</dbReference>
<dbReference type="HAMAP" id="MF_00182">
    <property type="entry name" value="Formyl_trans"/>
    <property type="match status" value="1"/>
</dbReference>
<dbReference type="InterPro" id="IPR005794">
    <property type="entry name" value="Fmt"/>
</dbReference>
<dbReference type="InterPro" id="IPR005793">
    <property type="entry name" value="Formyl_trans_C"/>
</dbReference>
<dbReference type="InterPro" id="IPR037022">
    <property type="entry name" value="Formyl_trans_C_sf"/>
</dbReference>
<dbReference type="InterPro" id="IPR002376">
    <property type="entry name" value="Formyl_transf_N"/>
</dbReference>
<dbReference type="InterPro" id="IPR036477">
    <property type="entry name" value="Formyl_transf_N_sf"/>
</dbReference>
<dbReference type="InterPro" id="IPR011034">
    <property type="entry name" value="Formyl_transferase-like_C_sf"/>
</dbReference>
<dbReference type="InterPro" id="IPR044135">
    <property type="entry name" value="Met-tRNA-FMT_C"/>
</dbReference>
<dbReference type="InterPro" id="IPR041711">
    <property type="entry name" value="Met-tRNA-FMT_N"/>
</dbReference>
<dbReference type="NCBIfam" id="TIGR00460">
    <property type="entry name" value="fmt"/>
    <property type="match status" value="1"/>
</dbReference>
<dbReference type="PANTHER" id="PTHR11138">
    <property type="entry name" value="METHIONYL-TRNA FORMYLTRANSFERASE"/>
    <property type="match status" value="1"/>
</dbReference>
<dbReference type="PANTHER" id="PTHR11138:SF5">
    <property type="entry name" value="METHIONYL-TRNA FORMYLTRANSFERASE, MITOCHONDRIAL"/>
    <property type="match status" value="1"/>
</dbReference>
<dbReference type="Pfam" id="PF02911">
    <property type="entry name" value="Formyl_trans_C"/>
    <property type="match status" value="1"/>
</dbReference>
<dbReference type="Pfam" id="PF00551">
    <property type="entry name" value="Formyl_trans_N"/>
    <property type="match status" value="1"/>
</dbReference>
<dbReference type="SUPFAM" id="SSF50486">
    <property type="entry name" value="FMT C-terminal domain-like"/>
    <property type="match status" value="1"/>
</dbReference>
<dbReference type="SUPFAM" id="SSF53328">
    <property type="entry name" value="Formyltransferase"/>
    <property type="match status" value="1"/>
</dbReference>
<name>FMT_SERP5</name>
<comment type="function">
    <text evidence="1">Attaches a formyl group to the free amino group of methionyl-tRNA(fMet). The formyl group appears to play a dual role in the initiator identity of N-formylmethionyl-tRNA by promoting its recognition by IF2 and preventing the misappropriation of this tRNA by the elongation apparatus.</text>
</comment>
<comment type="catalytic activity">
    <reaction evidence="1">
        <text>L-methionyl-tRNA(fMet) + (6R)-10-formyltetrahydrofolate = N-formyl-L-methionyl-tRNA(fMet) + (6S)-5,6,7,8-tetrahydrofolate + H(+)</text>
        <dbReference type="Rhea" id="RHEA:24380"/>
        <dbReference type="Rhea" id="RHEA-COMP:9952"/>
        <dbReference type="Rhea" id="RHEA-COMP:9953"/>
        <dbReference type="ChEBI" id="CHEBI:15378"/>
        <dbReference type="ChEBI" id="CHEBI:57453"/>
        <dbReference type="ChEBI" id="CHEBI:78530"/>
        <dbReference type="ChEBI" id="CHEBI:78844"/>
        <dbReference type="ChEBI" id="CHEBI:195366"/>
        <dbReference type="EC" id="2.1.2.9"/>
    </reaction>
</comment>
<comment type="similarity">
    <text evidence="1">Belongs to the Fmt family.</text>
</comment>